<reference key="1">
    <citation type="journal article" date="1996" name="Science">
        <title>Complete genome sequence of the methanogenic archaeon, Methanococcus jannaschii.</title>
        <authorList>
            <person name="Bult C.J."/>
            <person name="White O."/>
            <person name="Olsen G.J."/>
            <person name="Zhou L."/>
            <person name="Fleischmann R.D."/>
            <person name="Sutton G.G."/>
            <person name="Blake J.A."/>
            <person name="FitzGerald L.M."/>
            <person name="Clayton R.A."/>
            <person name="Gocayne J.D."/>
            <person name="Kerlavage A.R."/>
            <person name="Dougherty B.A."/>
            <person name="Tomb J.-F."/>
            <person name="Adams M.D."/>
            <person name="Reich C.I."/>
            <person name="Overbeek R."/>
            <person name="Kirkness E.F."/>
            <person name="Weinstock K.G."/>
            <person name="Merrick J.M."/>
            <person name="Glodek A."/>
            <person name="Scott J.L."/>
            <person name="Geoghagen N.S.M."/>
            <person name="Weidman J.F."/>
            <person name="Fuhrmann J.L."/>
            <person name="Nguyen D."/>
            <person name="Utterback T.R."/>
            <person name="Kelley J.M."/>
            <person name="Peterson J.D."/>
            <person name="Sadow P.W."/>
            <person name="Hanna M.C."/>
            <person name="Cotton M.D."/>
            <person name="Roberts K.M."/>
            <person name="Hurst M.A."/>
            <person name="Kaine B.P."/>
            <person name="Borodovsky M."/>
            <person name="Klenk H.-P."/>
            <person name="Fraser C.M."/>
            <person name="Smith H.O."/>
            <person name="Woese C.R."/>
            <person name="Venter J.C."/>
        </authorList>
    </citation>
    <scope>NUCLEOTIDE SEQUENCE [LARGE SCALE GENOMIC DNA]</scope>
    <source>
        <strain>ATCC 43067 / DSM 2661 / JAL-1 / JCM 10045 / NBRC 100440</strain>
    </source>
</reference>
<reference key="2">
    <citation type="journal article" date="2005" name="Nucleic Acids Res.">
        <title>Toxin-antitoxin loci are highly abundant in free-living but lost from host-associated prokaryotes.</title>
        <authorList>
            <person name="Pandey D.P."/>
            <person name="Gerdes K."/>
        </authorList>
    </citation>
    <scope>POSSIBLE FUNCTION</scope>
    <source>
        <strain>ATCC 43067 / DSM 2661 / JAL-1 / JCM 10045 / NBRC 100440</strain>
    </source>
</reference>
<keyword id="KW-1185">Reference proteome</keyword>
<keyword id="KW-1277">Toxin-antitoxin system</keyword>
<feature type="chain" id="PRO_0000408087" description="Putative antitoxin VapB1">
    <location>
        <begin position="1"/>
        <end position="64"/>
    </location>
</feature>
<comment type="function">
    <text evidence="1">Possibly the antitoxin component of a type II toxin-antitoxin (TA) system. Its cognate toxin is VapC1 (Potential).</text>
</comment>
<name>VAPB1_METJA</name>
<proteinExistence type="predicted"/>
<gene>
    <name type="primary">vapB1</name>
    <name type="ordered locus">MJ0913.1</name>
</gene>
<evidence type="ECO:0000305" key="1"/>
<organism>
    <name type="scientific">Methanocaldococcus jannaschii (strain ATCC 43067 / DSM 2661 / JAL-1 / JCM 10045 / NBRC 100440)</name>
    <name type="common">Methanococcus jannaschii</name>
    <dbReference type="NCBI Taxonomy" id="243232"/>
    <lineage>
        <taxon>Archaea</taxon>
        <taxon>Methanobacteriati</taxon>
        <taxon>Methanobacteriota</taxon>
        <taxon>Methanomada group</taxon>
        <taxon>Methanococci</taxon>
        <taxon>Methanococcales</taxon>
        <taxon>Methanocaldococcaceae</taxon>
        <taxon>Methanocaldococcus</taxon>
    </lineage>
</organism>
<protein>
    <recommendedName>
        <fullName>Putative antitoxin VapB1</fullName>
    </recommendedName>
</protein>
<sequence length="64" mass="7775">MISAKSKTKRITITFEIPEDIDAKKFKDDVKRYVRYKLLANKLYELLEGENIEEIEEEIRKRRE</sequence>
<dbReference type="EMBL" id="L77117">
    <property type="status" value="NOT_ANNOTATED_CDS"/>
    <property type="molecule type" value="Genomic_DNA"/>
</dbReference>
<dbReference type="RefSeq" id="WP_064496664.1">
    <property type="nucleotide sequence ID" value="NC_000909.1"/>
</dbReference>
<dbReference type="SMR" id="P0CW37"/>
<dbReference type="GeneID" id="27929980"/>
<dbReference type="InParanoid" id="P0CW37"/>
<dbReference type="Proteomes" id="UP000000805">
    <property type="component" value="Chromosome"/>
</dbReference>
<accession>P0CW37</accession>